<dbReference type="EMBL" id="U94318">
    <property type="protein sequence ID" value="AAC45245.1"/>
    <property type="molecule type" value="Genomic_DNA"/>
</dbReference>
<dbReference type="EMBL" id="AE000511">
    <property type="protein sequence ID" value="AAD07936.1"/>
    <property type="molecule type" value="Genomic_DNA"/>
</dbReference>
<dbReference type="PIR" id="H64630">
    <property type="entry name" value="H64630"/>
</dbReference>
<dbReference type="RefSeq" id="NP_207681.1">
    <property type="nucleotide sequence ID" value="NC_000915.1"/>
</dbReference>
<dbReference type="RefSeq" id="WP_000242349.1">
    <property type="nucleotide sequence ID" value="NC_018939.1"/>
</dbReference>
<dbReference type="SMR" id="O05732"/>
<dbReference type="FunCoup" id="O05732">
    <property type="interactions" value="231"/>
</dbReference>
<dbReference type="STRING" id="85962.HP_0888"/>
<dbReference type="PaxDb" id="85962-C694_04560"/>
<dbReference type="EnsemblBacteria" id="AAD07936">
    <property type="protein sequence ID" value="AAD07936"/>
    <property type="gene ID" value="HP_0888"/>
</dbReference>
<dbReference type="KEGG" id="heo:C694_04560"/>
<dbReference type="KEGG" id="hpy:HP_0888"/>
<dbReference type="PATRIC" id="fig|85962.47.peg.946"/>
<dbReference type="eggNOG" id="COG1120">
    <property type="taxonomic scope" value="Bacteria"/>
</dbReference>
<dbReference type="InParanoid" id="O05732"/>
<dbReference type="OrthoDB" id="5515229at2"/>
<dbReference type="PhylomeDB" id="O05732"/>
<dbReference type="Proteomes" id="UP000000429">
    <property type="component" value="Chromosome"/>
</dbReference>
<dbReference type="GO" id="GO:0043190">
    <property type="term" value="C:ATP-binding cassette (ABC) transporter complex"/>
    <property type="evidence" value="ECO:0000318"/>
    <property type="project" value="GO_Central"/>
</dbReference>
<dbReference type="GO" id="GO:0005524">
    <property type="term" value="F:ATP binding"/>
    <property type="evidence" value="ECO:0007669"/>
    <property type="project" value="UniProtKB-KW"/>
</dbReference>
<dbReference type="GO" id="GO:0016887">
    <property type="term" value="F:ATP hydrolysis activity"/>
    <property type="evidence" value="ECO:0007669"/>
    <property type="project" value="InterPro"/>
</dbReference>
<dbReference type="GO" id="GO:0042626">
    <property type="term" value="F:ATPase-coupled transmembrane transporter activity"/>
    <property type="evidence" value="ECO:0000318"/>
    <property type="project" value="GO_Central"/>
</dbReference>
<dbReference type="GO" id="GO:0006826">
    <property type="term" value="P:iron ion transport"/>
    <property type="evidence" value="ECO:0007669"/>
    <property type="project" value="UniProtKB-KW"/>
</dbReference>
<dbReference type="CDD" id="cd03214">
    <property type="entry name" value="ABC_Iron-Siderophores_B12_Hemin"/>
    <property type="match status" value="1"/>
</dbReference>
<dbReference type="FunFam" id="3.40.50.300:FF:000134">
    <property type="entry name" value="Iron-enterobactin ABC transporter ATP-binding protein"/>
    <property type="match status" value="1"/>
</dbReference>
<dbReference type="Gene3D" id="3.40.50.300">
    <property type="entry name" value="P-loop containing nucleotide triphosphate hydrolases"/>
    <property type="match status" value="1"/>
</dbReference>
<dbReference type="InterPro" id="IPR003593">
    <property type="entry name" value="AAA+_ATPase"/>
</dbReference>
<dbReference type="InterPro" id="IPR003439">
    <property type="entry name" value="ABC_transporter-like_ATP-bd"/>
</dbReference>
<dbReference type="InterPro" id="IPR017871">
    <property type="entry name" value="ABC_transporter-like_CS"/>
</dbReference>
<dbReference type="InterPro" id="IPR050153">
    <property type="entry name" value="Metal_Ion_Import_ABC"/>
</dbReference>
<dbReference type="InterPro" id="IPR027417">
    <property type="entry name" value="P-loop_NTPase"/>
</dbReference>
<dbReference type="PANTHER" id="PTHR42734">
    <property type="entry name" value="METAL TRANSPORT SYSTEM ATP-BINDING PROTEIN TM_0124-RELATED"/>
    <property type="match status" value="1"/>
</dbReference>
<dbReference type="PANTHER" id="PTHR42734:SF6">
    <property type="entry name" value="MOLYBDATE IMPORT ATP-BINDING PROTEIN MOLC"/>
    <property type="match status" value="1"/>
</dbReference>
<dbReference type="Pfam" id="PF00005">
    <property type="entry name" value="ABC_tran"/>
    <property type="match status" value="1"/>
</dbReference>
<dbReference type="SMART" id="SM00382">
    <property type="entry name" value="AAA"/>
    <property type="match status" value="1"/>
</dbReference>
<dbReference type="SUPFAM" id="SSF52540">
    <property type="entry name" value="P-loop containing nucleoside triphosphate hydrolases"/>
    <property type="match status" value="1"/>
</dbReference>
<dbReference type="PROSITE" id="PS00211">
    <property type="entry name" value="ABC_TRANSPORTER_1"/>
    <property type="match status" value="1"/>
</dbReference>
<dbReference type="PROSITE" id="PS50893">
    <property type="entry name" value="ABC_TRANSPORTER_2"/>
    <property type="match status" value="1"/>
</dbReference>
<name>Y888_HELPY</name>
<keyword id="KW-0067">ATP-binding</keyword>
<keyword id="KW-0997">Cell inner membrane</keyword>
<keyword id="KW-1003">Cell membrane</keyword>
<keyword id="KW-0406">Ion transport</keyword>
<keyword id="KW-0408">Iron</keyword>
<keyword id="KW-0410">Iron transport</keyword>
<keyword id="KW-0472">Membrane</keyword>
<keyword id="KW-0547">Nucleotide-binding</keyword>
<keyword id="KW-1185">Reference proteome</keyword>
<keyword id="KW-0813">Transport</keyword>
<comment type="function">
    <text evidence="2">Part of a binding-protein-dependent transport system for an iron chelatin. Probably responsible for energy coupling to the transport system (Potential).</text>
</comment>
<comment type="subcellular location">
    <subcellularLocation>
        <location evidence="2">Cell inner membrane</location>
        <topology evidence="2">Peripheral membrane protein</topology>
    </subcellularLocation>
</comment>
<comment type="similarity">
    <text evidence="2">Belongs to the ABC transporter superfamily.</text>
</comment>
<feature type="chain" id="PRO_0000093210" description="Probable iron chelatin transport ATP-binding protein HP_0888">
    <location>
        <begin position="1"/>
        <end position="255"/>
    </location>
</feature>
<feature type="domain" description="ABC transporter" evidence="1">
    <location>
        <begin position="3"/>
        <end position="240"/>
    </location>
</feature>
<feature type="binding site" evidence="1">
    <location>
        <begin position="35"/>
        <end position="42"/>
    </location>
    <ligand>
        <name>ATP</name>
        <dbReference type="ChEBI" id="CHEBI:30616"/>
    </ligand>
</feature>
<evidence type="ECO:0000255" key="1">
    <source>
        <dbReference type="PROSITE-ProRule" id="PRU00434"/>
    </source>
</evidence>
<evidence type="ECO:0000305" key="2"/>
<organism>
    <name type="scientific">Helicobacter pylori (strain ATCC 700392 / 26695)</name>
    <name type="common">Campylobacter pylori</name>
    <dbReference type="NCBI Taxonomy" id="85962"/>
    <lineage>
        <taxon>Bacteria</taxon>
        <taxon>Pseudomonadati</taxon>
        <taxon>Campylobacterota</taxon>
        <taxon>Epsilonproteobacteria</taxon>
        <taxon>Campylobacterales</taxon>
        <taxon>Helicobacteraceae</taxon>
        <taxon>Helicobacter</taxon>
    </lineage>
</organism>
<sequence length="255" mass="28682">MVLEVKNLSFKYSQKLILDKLSFSVPKNSITSILAPNGSGKTTLLKCLLGLLKPLEETEIKACNKDILPLKPYEKAKLIAYIPQVEYYAFNFSVLDFVLMGKATHLNLFAMPKAKHIKEATSVLERLDLESLKDQGINDLSGGQRQMVLLARSLLQRTPLLLLDEPTSALDLKNQALFFDAIKDEMKKRELSVLVNIHDPNLVARHSTHVVMLKDKKLFLQASTPIAMTSHNLSALYDTPLEAIWHDNKLVVYAL</sequence>
<accession>O05732</accession>
<reference key="1">
    <citation type="journal article" date="1997" name="J. Bacteriol.">
        <title>High-level genetic diversity in the vapD chromosomal region of Helicobacter pylori.</title>
        <authorList>
            <person name="Cao P."/>
            <person name="Cover T.L."/>
        </authorList>
    </citation>
    <scope>NUCLEOTIDE SEQUENCE [GENOMIC DNA]</scope>
    <source>
        <strain>ATCC 49503 / 60190</strain>
    </source>
</reference>
<reference key="2">
    <citation type="journal article" date="1997" name="Nature">
        <title>The complete genome sequence of the gastric pathogen Helicobacter pylori.</title>
        <authorList>
            <person name="Tomb J.-F."/>
            <person name="White O."/>
            <person name="Kerlavage A.R."/>
            <person name="Clayton R.A."/>
            <person name="Sutton G.G."/>
            <person name="Fleischmann R.D."/>
            <person name="Ketchum K.A."/>
            <person name="Klenk H.-P."/>
            <person name="Gill S.R."/>
            <person name="Dougherty B.A."/>
            <person name="Nelson K.E."/>
            <person name="Quackenbush J."/>
            <person name="Zhou L."/>
            <person name="Kirkness E.F."/>
            <person name="Peterson S.N."/>
            <person name="Loftus B.J."/>
            <person name="Richardson D.L."/>
            <person name="Dodson R.J."/>
            <person name="Khalak H.G."/>
            <person name="Glodek A."/>
            <person name="McKenney K."/>
            <person name="FitzGerald L.M."/>
            <person name="Lee N."/>
            <person name="Adams M.D."/>
            <person name="Hickey E.K."/>
            <person name="Berg D.E."/>
            <person name="Gocayne J.D."/>
            <person name="Utterback T.R."/>
            <person name="Peterson J.D."/>
            <person name="Kelley J.M."/>
            <person name="Cotton M.D."/>
            <person name="Weidman J.F."/>
            <person name="Fujii C."/>
            <person name="Bowman C."/>
            <person name="Watthey L."/>
            <person name="Wallin E."/>
            <person name="Hayes W.S."/>
            <person name="Borodovsky M."/>
            <person name="Karp P.D."/>
            <person name="Smith H.O."/>
            <person name="Fraser C.M."/>
            <person name="Venter J.C."/>
        </authorList>
    </citation>
    <scope>NUCLEOTIDE SEQUENCE [LARGE SCALE GENOMIC DNA]</scope>
    <source>
        <strain>ATCC 700392 / 26695</strain>
    </source>
</reference>
<proteinExistence type="inferred from homology"/>
<protein>
    <recommendedName>
        <fullName>Probable iron chelatin transport ATP-binding protein HP_0888</fullName>
    </recommendedName>
</protein>
<gene>
    <name type="ordered locus">HP_0888</name>
</gene>